<feature type="chain" id="PRO_0000360106" description="Tryptophan 2,3-dioxygenase">
    <location>
        <begin position="1"/>
        <end position="306"/>
    </location>
</feature>
<feature type="region of interest" description="Disordered" evidence="2">
    <location>
        <begin position="1"/>
        <end position="29"/>
    </location>
</feature>
<feature type="binding site" evidence="1">
    <location>
        <begin position="75"/>
        <end position="79"/>
    </location>
    <ligand>
        <name>substrate</name>
    </ligand>
</feature>
<feature type="binding site" evidence="1">
    <location>
        <position position="137"/>
    </location>
    <ligand>
        <name>substrate</name>
    </ligand>
</feature>
<feature type="binding site" evidence="1">
    <location>
        <position position="141"/>
    </location>
    <ligand>
        <name>substrate</name>
    </ligand>
</feature>
<feature type="binding site" description="axial binding residue" evidence="1">
    <location>
        <position position="264"/>
    </location>
    <ligand>
        <name>heme</name>
        <dbReference type="ChEBI" id="CHEBI:30413"/>
    </ligand>
    <ligandPart>
        <name>Fe</name>
        <dbReference type="ChEBI" id="CHEBI:18248"/>
    </ligandPart>
</feature>
<feature type="binding site" evidence="1">
    <location>
        <position position="278"/>
    </location>
    <ligand>
        <name>substrate</name>
    </ligand>
</feature>
<sequence>MQPPGDDAAPRCPFAGAHAPDAPHVPEAAGDDVQAGWHRAQLDFSQSMSYGDYLSLDPILDAQHPRSPDHNEMLFIIQHQTSELWMKLALYELRAALASIRDDALPPAFKMLARVSRVLEQLVQAWNVLATMTPSEYSAMRPYLGASSGFQSYQYRELEFILGNKNAQMLRPHAHRPAIHAHLEASLQAPSLYDEVIRLLARRGFPIAPERLDADWTQPTRHDRTVETAWLAVYREPNAHWELYEMAEELVDLEDAFRQWRFRHVTTVERIIGFKQGTGSTSGAPYLRKMLDVVLFPELWHVRTTL</sequence>
<gene>
    <name evidence="1" type="primary">kynA</name>
    <name type="ordered locus">BMASAVP1_A0650</name>
</gene>
<evidence type="ECO:0000255" key="1">
    <source>
        <dbReference type="HAMAP-Rule" id="MF_01972"/>
    </source>
</evidence>
<evidence type="ECO:0000256" key="2">
    <source>
        <dbReference type="SAM" id="MobiDB-lite"/>
    </source>
</evidence>
<reference key="1">
    <citation type="journal article" date="2010" name="Genome Biol. Evol.">
        <title>Continuing evolution of Burkholderia mallei through genome reduction and large-scale rearrangements.</title>
        <authorList>
            <person name="Losada L."/>
            <person name="Ronning C.M."/>
            <person name="DeShazer D."/>
            <person name="Woods D."/>
            <person name="Fedorova N."/>
            <person name="Kim H.S."/>
            <person name="Shabalina S.A."/>
            <person name="Pearson T.R."/>
            <person name="Brinkac L."/>
            <person name="Tan P."/>
            <person name="Nandi T."/>
            <person name="Crabtree J."/>
            <person name="Badger J."/>
            <person name="Beckstrom-Sternberg S."/>
            <person name="Saqib M."/>
            <person name="Schutzer S.E."/>
            <person name="Keim P."/>
            <person name="Nierman W.C."/>
        </authorList>
    </citation>
    <scope>NUCLEOTIDE SEQUENCE [LARGE SCALE GENOMIC DNA]</scope>
    <source>
        <strain>SAVP1</strain>
    </source>
</reference>
<protein>
    <recommendedName>
        <fullName evidence="1">Tryptophan 2,3-dioxygenase</fullName>
        <shortName evidence="1">TDO</shortName>
        <ecNumber evidence="1">1.13.11.11</ecNumber>
    </recommendedName>
    <alternativeName>
        <fullName evidence="1">Tryptamin 2,3-dioxygenase</fullName>
    </alternativeName>
    <alternativeName>
        <fullName evidence="1">Tryptophan oxygenase</fullName>
        <shortName evidence="1">TO</shortName>
        <shortName evidence="1">TRPO</shortName>
    </alternativeName>
    <alternativeName>
        <fullName evidence="1">Tryptophan pyrrolase</fullName>
    </alternativeName>
    <alternativeName>
        <fullName evidence="1">Tryptophanase</fullName>
    </alternativeName>
</protein>
<keyword id="KW-0223">Dioxygenase</keyword>
<keyword id="KW-0349">Heme</keyword>
<keyword id="KW-0408">Iron</keyword>
<keyword id="KW-0479">Metal-binding</keyword>
<keyword id="KW-0560">Oxidoreductase</keyword>
<keyword id="KW-0823">Tryptophan catabolism</keyword>
<name>T23O_BURMS</name>
<proteinExistence type="inferred from homology"/>
<comment type="function">
    <text evidence="1">Heme-dependent dioxygenase that catalyzes the oxidative cleavage of the L-tryptophan (L-Trp) pyrrole ring and converts L-tryptophan to N-formyl-L-kynurenine. Catalyzes the oxidative cleavage of the indole moiety.</text>
</comment>
<comment type="catalytic activity">
    <reaction evidence="1">
        <text>L-tryptophan + O2 = N-formyl-L-kynurenine</text>
        <dbReference type="Rhea" id="RHEA:24536"/>
        <dbReference type="ChEBI" id="CHEBI:15379"/>
        <dbReference type="ChEBI" id="CHEBI:57912"/>
        <dbReference type="ChEBI" id="CHEBI:58629"/>
        <dbReference type="EC" id="1.13.11.11"/>
    </reaction>
</comment>
<comment type="cofactor">
    <cofactor evidence="1">
        <name>heme</name>
        <dbReference type="ChEBI" id="CHEBI:30413"/>
    </cofactor>
    <text evidence="1">Binds 1 heme group per subunit.</text>
</comment>
<comment type="pathway">
    <text evidence="1">Amino-acid degradation; L-tryptophan degradation via kynurenine pathway; L-kynurenine from L-tryptophan: step 1/2.</text>
</comment>
<comment type="subunit">
    <text evidence="1">Homotetramer.</text>
</comment>
<comment type="similarity">
    <text evidence="1">Belongs to the tryptophan 2,3-dioxygenase family.</text>
</comment>
<accession>A1V193</accession>
<dbReference type="EC" id="1.13.11.11" evidence="1"/>
<dbReference type="EMBL" id="CP000526">
    <property type="protein sequence ID" value="ABM51851.1"/>
    <property type="molecule type" value="Genomic_DNA"/>
</dbReference>
<dbReference type="RefSeq" id="WP_004189970.1">
    <property type="nucleotide sequence ID" value="NC_008785.1"/>
</dbReference>
<dbReference type="SMR" id="A1V193"/>
<dbReference type="GeneID" id="92978121"/>
<dbReference type="KEGG" id="bmv:BMASAVP1_A0650"/>
<dbReference type="HOGENOM" id="CLU_063240_0_0_4"/>
<dbReference type="UniPathway" id="UPA00333">
    <property type="reaction ID" value="UER00453"/>
</dbReference>
<dbReference type="GO" id="GO:0020037">
    <property type="term" value="F:heme binding"/>
    <property type="evidence" value="ECO:0000250"/>
    <property type="project" value="UniProtKB"/>
</dbReference>
<dbReference type="GO" id="GO:0046872">
    <property type="term" value="F:metal ion binding"/>
    <property type="evidence" value="ECO:0007669"/>
    <property type="project" value="UniProtKB-KW"/>
</dbReference>
<dbReference type="GO" id="GO:0004833">
    <property type="term" value="F:tryptophan 2,3-dioxygenase activity"/>
    <property type="evidence" value="ECO:0000250"/>
    <property type="project" value="UniProtKB"/>
</dbReference>
<dbReference type="GO" id="GO:0019442">
    <property type="term" value="P:L-tryptophan catabolic process to acetyl-CoA"/>
    <property type="evidence" value="ECO:0007669"/>
    <property type="project" value="TreeGrafter"/>
</dbReference>
<dbReference type="GO" id="GO:0019441">
    <property type="term" value="P:L-tryptophan catabolic process to kynurenine"/>
    <property type="evidence" value="ECO:0000250"/>
    <property type="project" value="UniProtKB"/>
</dbReference>
<dbReference type="FunFam" id="1.20.58.480:FF:000001">
    <property type="entry name" value="Tryptophan 2,3-dioxygenase"/>
    <property type="match status" value="1"/>
</dbReference>
<dbReference type="Gene3D" id="1.20.58.480">
    <property type="match status" value="1"/>
</dbReference>
<dbReference type="HAMAP" id="MF_01972">
    <property type="entry name" value="T23O"/>
    <property type="match status" value="1"/>
</dbReference>
<dbReference type="InterPro" id="IPR037217">
    <property type="entry name" value="Trp/Indoleamine_2_3_dOase-like"/>
</dbReference>
<dbReference type="InterPro" id="IPR017485">
    <property type="entry name" value="Trp_2-3-dOase_bac"/>
</dbReference>
<dbReference type="InterPro" id="IPR004981">
    <property type="entry name" value="Trp_2_3_dOase"/>
</dbReference>
<dbReference type="NCBIfam" id="TIGR03036">
    <property type="entry name" value="trp_2_3_diox"/>
    <property type="match status" value="1"/>
</dbReference>
<dbReference type="PANTHER" id="PTHR10138">
    <property type="entry name" value="TRYPTOPHAN 2,3-DIOXYGENASE"/>
    <property type="match status" value="1"/>
</dbReference>
<dbReference type="PANTHER" id="PTHR10138:SF0">
    <property type="entry name" value="TRYPTOPHAN 2,3-DIOXYGENASE"/>
    <property type="match status" value="1"/>
</dbReference>
<dbReference type="Pfam" id="PF03301">
    <property type="entry name" value="Trp_dioxygenase"/>
    <property type="match status" value="1"/>
</dbReference>
<dbReference type="SUPFAM" id="SSF140959">
    <property type="entry name" value="Indolic compounds 2,3-dioxygenase-like"/>
    <property type="match status" value="1"/>
</dbReference>
<organism>
    <name type="scientific">Burkholderia mallei (strain SAVP1)</name>
    <dbReference type="NCBI Taxonomy" id="320388"/>
    <lineage>
        <taxon>Bacteria</taxon>
        <taxon>Pseudomonadati</taxon>
        <taxon>Pseudomonadota</taxon>
        <taxon>Betaproteobacteria</taxon>
        <taxon>Burkholderiales</taxon>
        <taxon>Burkholderiaceae</taxon>
        <taxon>Burkholderia</taxon>
        <taxon>pseudomallei group</taxon>
    </lineage>
</organism>